<comment type="function">
    <text evidence="1">Catalyzes carboxymethyl transfer from carboxy-S-adenosyl-L-methionine (Cx-SAM) to 5-hydroxyuridine (ho5U) to form 5-carboxymethoxyuridine (cmo5U) at position 34 in tRNAs.</text>
</comment>
<comment type="catalytic activity">
    <reaction evidence="1">
        <text>carboxy-S-adenosyl-L-methionine + 5-hydroxyuridine(34) in tRNA = 5-carboxymethoxyuridine(34) in tRNA + S-adenosyl-L-homocysteine + H(+)</text>
        <dbReference type="Rhea" id="RHEA:52848"/>
        <dbReference type="Rhea" id="RHEA-COMP:13381"/>
        <dbReference type="Rhea" id="RHEA-COMP:13383"/>
        <dbReference type="ChEBI" id="CHEBI:15378"/>
        <dbReference type="ChEBI" id="CHEBI:57856"/>
        <dbReference type="ChEBI" id="CHEBI:134278"/>
        <dbReference type="ChEBI" id="CHEBI:136877"/>
        <dbReference type="ChEBI" id="CHEBI:136879"/>
    </reaction>
</comment>
<comment type="similarity">
    <text evidence="1">Belongs to the class I-like SAM-binding methyltransferase superfamily. CmoB family.</text>
</comment>
<proteinExistence type="inferred from homology"/>
<accession>Q10V92</accession>
<protein>
    <recommendedName>
        <fullName evidence="1">tRNA U34 carboxymethyltransferase</fullName>
        <ecNumber evidence="1">2.5.1.-</ecNumber>
    </recommendedName>
</protein>
<sequence>MLNKNIGYISPDYLYKYNSPINTEAILKIRQERQAKLFKFSHEKYYKAVQTIADIQSNFFDCSSAVIKVGHPEEISPGQKQRLYHCLQTFCPWKKGPFELFGVNIDAEWRSDWKWDRILPHISSIKNRKVADIGCHNGYFMFRMVDQQPELVIGFEPYSKHFWNFQLIQNIVKQKMLAFELLGVEHIHYYPQFFDTIFCLGILYHHTDPIGLLRKMRQALGPKGEVIIDCQGIPGDLPVALTPQKRYAQARGIWFLPTQSCLENWIGRAGFSDINCFFAAPLSVEEQRRTIWANIDSLPEFLDPHNPSLTVEGYPAPWRYYAIARK</sequence>
<name>CMOB_TRIEI</name>
<feature type="chain" id="PRO_0000313984" description="tRNA U34 carboxymethyltransferase">
    <location>
        <begin position="1"/>
        <end position="326"/>
    </location>
</feature>
<feature type="binding site" evidence="1">
    <location>
        <position position="95"/>
    </location>
    <ligand>
        <name>carboxy-S-adenosyl-L-methionine</name>
        <dbReference type="ChEBI" id="CHEBI:134278"/>
    </ligand>
</feature>
<feature type="binding site" evidence="1">
    <location>
        <position position="109"/>
    </location>
    <ligand>
        <name>carboxy-S-adenosyl-L-methionine</name>
        <dbReference type="ChEBI" id="CHEBI:134278"/>
    </ligand>
</feature>
<feature type="binding site" evidence="1">
    <location>
        <position position="114"/>
    </location>
    <ligand>
        <name>carboxy-S-adenosyl-L-methionine</name>
        <dbReference type="ChEBI" id="CHEBI:134278"/>
    </ligand>
</feature>
<feature type="binding site" evidence="1">
    <location>
        <position position="134"/>
    </location>
    <ligand>
        <name>carboxy-S-adenosyl-L-methionine</name>
        <dbReference type="ChEBI" id="CHEBI:134278"/>
    </ligand>
</feature>
<feature type="binding site" evidence="1">
    <location>
        <begin position="184"/>
        <end position="185"/>
    </location>
    <ligand>
        <name>carboxy-S-adenosyl-L-methionine</name>
        <dbReference type="ChEBI" id="CHEBI:134278"/>
    </ligand>
</feature>
<feature type="binding site" evidence="1">
    <location>
        <position position="204"/>
    </location>
    <ligand>
        <name>carboxy-S-adenosyl-L-methionine</name>
        <dbReference type="ChEBI" id="CHEBI:134278"/>
    </ligand>
</feature>
<feature type="binding site" evidence="1">
    <location>
        <position position="319"/>
    </location>
    <ligand>
        <name>carboxy-S-adenosyl-L-methionine</name>
        <dbReference type="ChEBI" id="CHEBI:134278"/>
    </ligand>
</feature>
<organism>
    <name type="scientific">Trichodesmium erythraeum (strain IMS101)</name>
    <dbReference type="NCBI Taxonomy" id="203124"/>
    <lineage>
        <taxon>Bacteria</taxon>
        <taxon>Bacillati</taxon>
        <taxon>Cyanobacteriota</taxon>
        <taxon>Cyanophyceae</taxon>
        <taxon>Oscillatoriophycideae</taxon>
        <taxon>Oscillatoriales</taxon>
        <taxon>Microcoleaceae</taxon>
        <taxon>Trichodesmium</taxon>
    </lineage>
</organism>
<evidence type="ECO:0000255" key="1">
    <source>
        <dbReference type="HAMAP-Rule" id="MF_01590"/>
    </source>
</evidence>
<gene>
    <name evidence="1" type="primary">cmoB</name>
    <name type="ordered locus">Tery_4909</name>
</gene>
<dbReference type="EC" id="2.5.1.-" evidence="1"/>
<dbReference type="EMBL" id="CP000393">
    <property type="protein sequence ID" value="ABG53832.1"/>
    <property type="molecule type" value="Genomic_DNA"/>
</dbReference>
<dbReference type="RefSeq" id="WP_011614132.1">
    <property type="nucleotide sequence ID" value="NC_008312.1"/>
</dbReference>
<dbReference type="SMR" id="Q10V92"/>
<dbReference type="STRING" id="203124.Tery_4909"/>
<dbReference type="KEGG" id="ter:Tery_4909"/>
<dbReference type="eggNOG" id="COG0500">
    <property type="taxonomic scope" value="Bacteria"/>
</dbReference>
<dbReference type="HOGENOM" id="CLU_052665_0_0_3"/>
<dbReference type="OrthoDB" id="9772751at2"/>
<dbReference type="GO" id="GO:0016765">
    <property type="term" value="F:transferase activity, transferring alkyl or aryl (other than methyl) groups"/>
    <property type="evidence" value="ECO:0007669"/>
    <property type="project" value="UniProtKB-UniRule"/>
</dbReference>
<dbReference type="GO" id="GO:0002098">
    <property type="term" value="P:tRNA wobble uridine modification"/>
    <property type="evidence" value="ECO:0007669"/>
    <property type="project" value="InterPro"/>
</dbReference>
<dbReference type="CDD" id="cd02440">
    <property type="entry name" value="AdoMet_MTases"/>
    <property type="match status" value="1"/>
</dbReference>
<dbReference type="Gene3D" id="3.40.50.150">
    <property type="entry name" value="Vaccinia Virus protein VP39"/>
    <property type="match status" value="1"/>
</dbReference>
<dbReference type="HAMAP" id="MF_01590">
    <property type="entry name" value="tRNA_carboxymethyltr_CmoB"/>
    <property type="match status" value="1"/>
</dbReference>
<dbReference type="InterPro" id="IPR010017">
    <property type="entry name" value="CmoB"/>
</dbReference>
<dbReference type="InterPro" id="IPR027555">
    <property type="entry name" value="Mo5U34_MeTrfas-like"/>
</dbReference>
<dbReference type="InterPro" id="IPR029063">
    <property type="entry name" value="SAM-dependent_MTases_sf"/>
</dbReference>
<dbReference type="NCBIfam" id="NF011650">
    <property type="entry name" value="PRK15068.1"/>
    <property type="match status" value="1"/>
</dbReference>
<dbReference type="NCBIfam" id="TIGR00452">
    <property type="entry name" value="tRNA 5-methoxyuridine(34)/uridine 5-oxyacetic acid(34) synthase CmoB"/>
    <property type="match status" value="1"/>
</dbReference>
<dbReference type="Pfam" id="PF08003">
    <property type="entry name" value="Methyltransf_9"/>
    <property type="match status" value="1"/>
</dbReference>
<dbReference type="SUPFAM" id="SSF53335">
    <property type="entry name" value="S-adenosyl-L-methionine-dependent methyltransferases"/>
    <property type="match status" value="1"/>
</dbReference>
<reference key="1">
    <citation type="journal article" date="2015" name="Proc. Natl. Acad. Sci. U.S.A.">
        <title>Trichodesmium genome maintains abundant, widespread noncoding DNA in situ, despite oligotrophic lifestyle.</title>
        <authorList>
            <person name="Walworth N."/>
            <person name="Pfreundt U."/>
            <person name="Nelson W.C."/>
            <person name="Mincer T."/>
            <person name="Heidelberg J.F."/>
            <person name="Fu F."/>
            <person name="Waterbury J.B."/>
            <person name="Glavina del Rio T."/>
            <person name="Goodwin L."/>
            <person name="Kyrpides N.C."/>
            <person name="Land M.L."/>
            <person name="Woyke T."/>
            <person name="Hutchins D.A."/>
            <person name="Hess W.R."/>
            <person name="Webb E.A."/>
        </authorList>
    </citation>
    <scope>NUCLEOTIDE SEQUENCE [LARGE SCALE GENOMIC DNA]</scope>
    <source>
        <strain>IMS101</strain>
    </source>
</reference>
<keyword id="KW-0808">Transferase</keyword>
<keyword id="KW-0819">tRNA processing</keyword>